<protein>
    <recommendedName>
        <fullName evidence="1">Holliday junction branch migration complex subunit RuvA</fullName>
    </recommendedName>
</protein>
<proteinExistence type="inferred from homology"/>
<dbReference type="EMBL" id="CP000896">
    <property type="protein sequence ID" value="ABX80991.1"/>
    <property type="molecule type" value="Genomic_DNA"/>
</dbReference>
<dbReference type="RefSeq" id="WP_012242322.1">
    <property type="nucleotide sequence ID" value="NC_010163.1"/>
</dbReference>
<dbReference type="SMR" id="A9NF61"/>
<dbReference type="STRING" id="441768.ACL_0369"/>
<dbReference type="GeneID" id="41338551"/>
<dbReference type="KEGG" id="acl:ACL_0369"/>
<dbReference type="eggNOG" id="COG0632">
    <property type="taxonomic scope" value="Bacteria"/>
</dbReference>
<dbReference type="HOGENOM" id="CLU_087936_1_0_14"/>
<dbReference type="OrthoDB" id="5293449at2"/>
<dbReference type="Proteomes" id="UP000008558">
    <property type="component" value="Chromosome"/>
</dbReference>
<dbReference type="GO" id="GO:0005737">
    <property type="term" value="C:cytoplasm"/>
    <property type="evidence" value="ECO:0007669"/>
    <property type="project" value="UniProtKB-SubCell"/>
</dbReference>
<dbReference type="GO" id="GO:0009379">
    <property type="term" value="C:Holliday junction helicase complex"/>
    <property type="evidence" value="ECO:0007669"/>
    <property type="project" value="InterPro"/>
</dbReference>
<dbReference type="GO" id="GO:0048476">
    <property type="term" value="C:Holliday junction resolvase complex"/>
    <property type="evidence" value="ECO:0007669"/>
    <property type="project" value="UniProtKB-UniRule"/>
</dbReference>
<dbReference type="GO" id="GO:0005524">
    <property type="term" value="F:ATP binding"/>
    <property type="evidence" value="ECO:0007669"/>
    <property type="project" value="InterPro"/>
</dbReference>
<dbReference type="GO" id="GO:0000400">
    <property type="term" value="F:four-way junction DNA binding"/>
    <property type="evidence" value="ECO:0007669"/>
    <property type="project" value="UniProtKB-UniRule"/>
</dbReference>
<dbReference type="GO" id="GO:0009378">
    <property type="term" value="F:four-way junction helicase activity"/>
    <property type="evidence" value="ECO:0007669"/>
    <property type="project" value="InterPro"/>
</dbReference>
<dbReference type="GO" id="GO:0006310">
    <property type="term" value="P:DNA recombination"/>
    <property type="evidence" value="ECO:0007669"/>
    <property type="project" value="UniProtKB-UniRule"/>
</dbReference>
<dbReference type="GO" id="GO:0006281">
    <property type="term" value="P:DNA repair"/>
    <property type="evidence" value="ECO:0007669"/>
    <property type="project" value="UniProtKB-UniRule"/>
</dbReference>
<dbReference type="CDD" id="cd14332">
    <property type="entry name" value="UBA_RuvA_C"/>
    <property type="match status" value="1"/>
</dbReference>
<dbReference type="Gene3D" id="1.10.150.20">
    <property type="entry name" value="5' to 3' exonuclease, C-terminal subdomain"/>
    <property type="match status" value="1"/>
</dbReference>
<dbReference type="Gene3D" id="2.40.50.140">
    <property type="entry name" value="Nucleic acid-binding proteins"/>
    <property type="match status" value="1"/>
</dbReference>
<dbReference type="HAMAP" id="MF_00031">
    <property type="entry name" value="DNA_HJ_migration_RuvA"/>
    <property type="match status" value="1"/>
</dbReference>
<dbReference type="InterPro" id="IPR013849">
    <property type="entry name" value="DNA_helicase_Holl-junc_RuvA_I"/>
</dbReference>
<dbReference type="InterPro" id="IPR003583">
    <property type="entry name" value="Hlx-hairpin-Hlx_DNA-bd_motif"/>
</dbReference>
<dbReference type="InterPro" id="IPR012340">
    <property type="entry name" value="NA-bd_OB-fold"/>
</dbReference>
<dbReference type="InterPro" id="IPR000085">
    <property type="entry name" value="RuvA"/>
</dbReference>
<dbReference type="InterPro" id="IPR010994">
    <property type="entry name" value="RuvA_2-like"/>
</dbReference>
<dbReference type="InterPro" id="IPR011114">
    <property type="entry name" value="RuvA_C"/>
</dbReference>
<dbReference type="InterPro" id="IPR036267">
    <property type="entry name" value="RuvA_C_sf"/>
</dbReference>
<dbReference type="NCBIfam" id="TIGR00084">
    <property type="entry name" value="ruvA"/>
    <property type="match status" value="1"/>
</dbReference>
<dbReference type="Pfam" id="PF14520">
    <property type="entry name" value="HHH_5"/>
    <property type="match status" value="1"/>
</dbReference>
<dbReference type="Pfam" id="PF07499">
    <property type="entry name" value="RuvA_C"/>
    <property type="match status" value="1"/>
</dbReference>
<dbReference type="Pfam" id="PF01330">
    <property type="entry name" value="RuvA_N"/>
    <property type="match status" value="1"/>
</dbReference>
<dbReference type="SMART" id="SM00278">
    <property type="entry name" value="HhH1"/>
    <property type="match status" value="2"/>
</dbReference>
<dbReference type="SUPFAM" id="SSF46929">
    <property type="entry name" value="DNA helicase RuvA subunit, C-terminal domain"/>
    <property type="match status" value="1"/>
</dbReference>
<dbReference type="SUPFAM" id="SSF50249">
    <property type="entry name" value="Nucleic acid-binding proteins"/>
    <property type="match status" value="1"/>
</dbReference>
<dbReference type="SUPFAM" id="SSF47781">
    <property type="entry name" value="RuvA domain 2-like"/>
    <property type="match status" value="1"/>
</dbReference>
<evidence type="ECO:0000255" key="1">
    <source>
        <dbReference type="HAMAP-Rule" id="MF_00031"/>
    </source>
</evidence>
<keyword id="KW-0963">Cytoplasm</keyword>
<keyword id="KW-0227">DNA damage</keyword>
<keyword id="KW-0233">DNA recombination</keyword>
<keyword id="KW-0234">DNA repair</keyword>
<keyword id="KW-0238">DNA-binding</keyword>
<keyword id="KW-1185">Reference proteome</keyword>
<organism>
    <name type="scientific">Acholeplasma laidlawii (strain PG-8A)</name>
    <dbReference type="NCBI Taxonomy" id="441768"/>
    <lineage>
        <taxon>Bacteria</taxon>
        <taxon>Bacillati</taxon>
        <taxon>Mycoplasmatota</taxon>
        <taxon>Mollicutes</taxon>
        <taxon>Acholeplasmatales</taxon>
        <taxon>Acholeplasmataceae</taxon>
        <taxon>Acholeplasma</taxon>
    </lineage>
</organism>
<gene>
    <name evidence="1" type="primary">ruvA</name>
    <name type="ordered locus">ACL_0369</name>
</gene>
<sequence>MYRYIKGIVTQINPQHIVVENNGVGYLVLSPVPYQYKIGEETTVVTYLHVREDIFQLYGFKDEETLNLFLKLISVSGIGPKSAMSIVAFDDTNKIIAAIETSDAKYLTKFPGIGMKSAQQIILDLKGKLVNDELDMQLLSDNSKDVAAALEALGYNKKEIAKSLKHVNFDQDLNKALKEALAILLK</sequence>
<name>RUVA_ACHLI</name>
<comment type="function">
    <text evidence="1">The RuvA-RuvB-RuvC complex processes Holliday junction (HJ) DNA during genetic recombination and DNA repair, while the RuvA-RuvB complex plays an important role in the rescue of blocked DNA replication forks via replication fork reversal (RFR). RuvA specifically binds to HJ cruciform DNA, conferring on it an open structure. The RuvB hexamer acts as an ATP-dependent pump, pulling dsDNA into and through the RuvAB complex. HJ branch migration allows RuvC to scan DNA until it finds its consensus sequence, where it cleaves and resolves the cruciform DNA.</text>
</comment>
<comment type="subunit">
    <text evidence="1">Homotetramer. Forms an RuvA(8)-RuvB(12)-Holliday junction (HJ) complex. HJ DNA is sandwiched between 2 RuvA tetramers; dsDNA enters through RuvA and exits via RuvB. An RuvB hexamer assembles on each DNA strand where it exits the tetramer. Each RuvB hexamer is contacted by two RuvA subunits (via domain III) on 2 adjacent RuvB subunits; this complex drives branch migration. In the full resolvosome a probable DNA-RuvA(4)-RuvB(12)-RuvC(2) complex forms which resolves the HJ.</text>
</comment>
<comment type="subcellular location">
    <subcellularLocation>
        <location evidence="1">Cytoplasm</location>
    </subcellularLocation>
</comment>
<comment type="domain">
    <text evidence="1">Has three domains with a flexible linker between the domains II and III and assumes an 'L' shape. Domain III is highly mobile and contacts RuvB.</text>
</comment>
<comment type="similarity">
    <text evidence="1">Belongs to the RuvA family.</text>
</comment>
<feature type="chain" id="PRO_1000074408" description="Holliday junction branch migration complex subunit RuvA">
    <location>
        <begin position="1"/>
        <end position="186"/>
    </location>
</feature>
<feature type="region of interest" description="Domain I" evidence="1">
    <location>
        <begin position="1"/>
        <end position="61"/>
    </location>
</feature>
<feature type="region of interest" description="Domain II" evidence="1">
    <location>
        <begin position="62"/>
        <end position="134"/>
    </location>
</feature>
<feature type="region of interest" description="Flexible linker" evidence="1">
    <location>
        <begin position="134"/>
        <end position="137"/>
    </location>
</feature>
<feature type="region of interest" description="Domain III" evidence="1">
    <location>
        <begin position="138"/>
        <end position="186"/>
    </location>
</feature>
<reference key="1">
    <citation type="journal article" date="2011" name="J. Bacteriol.">
        <title>Complete genome and proteome of Acholeplasma laidlawii.</title>
        <authorList>
            <person name="Lazarev V.N."/>
            <person name="Levitskii S.A."/>
            <person name="Basovskii Y.I."/>
            <person name="Chukin M.M."/>
            <person name="Akopian T.A."/>
            <person name="Vereshchagin V.V."/>
            <person name="Kostrjukova E.S."/>
            <person name="Kovaleva G.Y."/>
            <person name="Kazanov M.D."/>
            <person name="Malko D.B."/>
            <person name="Vitreschak A.G."/>
            <person name="Sernova N.V."/>
            <person name="Gelfand M.S."/>
            <person name="Demina I.A."/>
            <person name="Serebryakova M.V."/>
            <person name="Galyamina M.A."/>
            <person name="Vtyurin N.N."/>
            <person name="Rogov S.I."/>
            <person name="Alexeev D.G."/>
            <person name="Ladygina V.G."/>
            <person name="Govorun V.M."/>
        </authorList>
    </citation>
    <scope>NUCLEOTIDE SEQUENCE [LARGE SCALE GENOMIC DNA]</scope>
    <source>
        <strain>PG-8A</strain>
    </source>
</reference>
<accession>A9NF61</accession>